<evidence type="ECO:0000255" key="1">
    <source>
        <dbReference type="HAMAP-Rule" id="MF_01082"/>
    </source>
</evidence>
<proteinExistence type="inferred from homology"/>
<gene>
    <name evidence="1" type="primary">truD</name>
    <name type="ordered locus">VV1_1584</name>
</gene>
<comment type="function">
    <text evidence="1">Responsible for synthesis of pseudouridine from uracil-13 in transfer RNAs.</text>
</comment>
<comment type="catalytic activity">
    <reaction evidence="1">
        <text>uridine(13) in tRNA = pseudouridine(13) in tRNA</text>
        <dbReference type="Rhea" id="RHEA:42540"/>
        <dbReference type="Rhea" id="RHEA-COMP:10105"/>
        <dbReference type="Rhea" id="RHEA-COMP:10106"/>
        <dbReference type="ChEBI" id="CHEBI:65314"/>
        <dbReference type="ChEBI" id="CHEBI:65315"/>
        <dbReference type="EC" id="5.4.99.27"/>
    </reaction>
</comment>
<comment type="similarity">
    <text evidence="1">Belongs to the pseudouridine synthase TruD family.</text>
</comment>
<reference key="1">
    <citation type="submission" date="2002-12" db="EMBL/GenBank/DDBJ databases">
        <title>Complete genome sequence of Vibrio vulnificus CMCP6.</title>
        <authorList>
            <person name="Rhee J.H."/>
            <person name="Kim S.Y."/>
            <person name="Chung S.S."/>
            <person name="Kim J.J."/>
            <person name="Moon Y.H."/>
            <person name="Jeong H."/>
            <person name="Choy H.E."/>
        </authorList>
    </citation>
    <scope>NUCLEOTIDE SEQUENCE [LARGE SCALE GENOMIC DNA]</scope>
    <source>
        <strain>CMCP6</strain>
    </source>
</reference>
<sequence>MTDTLASLAYLAGKPTAQAKIKAKPEHFQVREDLGFEFTGSGEHLMVRIRKTGENTSFVANELAKACGVKSKDVSWAGLKDRHAVTEQWLSVHLPKAETPDFSAFLAQYPSIEILTTARHNKKLRPGDLVGNDFVVTLSEVSDVDDVLKRLETVAKLGVPNYFGNQRFGNNGNNLQEAKRWGRDNVRSRNQNQRSLYLSAARSWIFNLIVSARLEQSLFDKVLLGDILFKGDEQLLVSAENHADLQSQYDAGDLVISGALAGDNALPTQDDALALEQVFLDAEPDLMALIRGNRMRHDRRAIALKPANLSWQVDGNNIILTFSLDAGSFATSIIRELVQEIAFEREF</sequence>
<keyword id="KW-0413">Isomerase</keyword>
<keyword id="KW-0819">tRNA processing</keyword>
<accession>Q8DC58</accession>
<protein>
    <recommendedName>
        <fullName evidence="1">tRNA pseudouridine synthase D</fullName>
        <ecNumber evidence="1">5.4.99.27</ecNumber>
    </recommendedName>
    <alternativeName>
        <fullName evidence="1">tRNA pseudouridine(13) synthase</fullName>
    </alternativeName>
    <alternativeName>
        <fullName evidence="1">tRNA pseudouridylate synthase D</fullName>
    </alternativeName>
    <alternativeName>
        <fullName evidence="1">tRNA-uridine isomerase D</fullName>
    </alternativeName>
</protein>
<dbReference type="EC" id="5.4.99.27" evidence="1"/>
<dbReference type="EMBL" id="AE016795">
    <property type="protein sequence ID" value="AAO10007.1"/>
    <property type="molecule type" value="Genomic_DNA"/>
</dbReference>
<dbReference type="RefSeq" id="WP_011079517.1">
    <property type="nucleotide sequence ID" value="NC_004459.3"/>
</dbReference>
<dbReference type="SMR" id="Q8DC58"/>
<dbReference type="KEGG" id="vvu:VV1_1584"/>
<dbReference type="HOGENOM" id="CLU_005281_4_0_6"/>
<dbReference type="Proteomes" id="UP000002275">
    <property type="component" value="Chromosome 1"/>
</dbReference>
<dbReference type="GO" id="GO:0005829">
    <property type="term" value="C:cytosol"/>
    <property type="evidence" value="ECO:0007669"/>
    <property type="project" value="TreeGrafter"/>
</dbReference>
<dbReference type="GO" id="GO:0003723">
    <property type="term" value="F:RNA binding"/>
    <property type="evidence" value="ECO:0007669"/>
    <property type="project" value="InterPro"/>
</dbReference>
<dbReference type="GO" id="GO:0160150">
    <property type="term" value="F:tRNA pseudouridine(13) synthase activity"/>
    <property type="evidence" value="ECO:0007669"/>
    <property type="project" value="UniProtKB-EC"/>
</dbReference>
<dbReference type="GO" id="GO:0031119">
    <property type="term" value="P:tRNA pseudouridine synthesis"/>
    <property type="evidence" value="ECO:0007669"/>
    <property type="project" value="UniProtKB-UniRule"/>
</dbReference>
<dbReference type="CDD" id="cd02575">
    <property type="entry name" value="PseudoU_synth_EcTruD"/>
    <property type="match status" value="1"/>
</dbReference>
<dbReference type="Gene3D" id="3.30.2350.20">
    <property type="entry name" value="TruD, catalytic domain"/>
    <property type="match status" value="1"/>
</dbReference>
<dbReference type="Gene3D" id="3.30.2340.10">
    <property type="entry name" value="TruD, insertion domain"/>
    <property type="match status" value="1"/>
</dbReference>
<dbReference type="HAMAP" id="MF_01082">
    <property type="entry name" value="TruD"/>
    <property type="match status" value="1"/>
</dbReference>
<dbReference type="InterPro" id="IPR020103">
    <property type="entry name" value="PsdUridine_synth_cat_dom_sf"/>
</dbReference>
<dbReference type="InterPro" id="IPR001656">
    <property type="entry name" value="PsdUridine_synth_TruD"/>
</dbReference>
<dbReference type="InterPro" id="IPR020119">
    <property type="entry name" value="PsdUridine_synth_TruD_CS"/>
</dbReference>
<dbReference type="InterPro" id="IPR011760">
    <property type="entry name" value="PsdUridine_synth_TruD_insert"/>
</dbReference>
<dbReference type="InterPro" id="IPR042214">
    <property type="entry name" value="TruD_catalytic"/>
</dbReference>
<dbReference type="InterPro" id="IPR043165">
    <property type="entry name" value="TruD_insert_sf"/>
</dbReference>
<dbReference type="InterPro" id="IPR050170">
    <property type="entry name" value="TruD_pseudoU_synthase"/>
</dbReference>
<dbReference type="NCBIfam" id="NF002155">
    <property type="entry name" value="PRK00984.1-4"/>
    <property type="match status" value="1"/>
</dbReference>
<dbReference type="NCBIfam" id="TIGR00094">
    <property type="entry name" value="tRNA_TruD_broad"/>
    <property type="match status" value="1"/>
</dbReference>
<dbReference type="PANTHER" id="PTHR47811">
    <property type="entry name" value="TRNA PSEUDOURIDINE SYNTHASE D"/>
    <property type="match status" value="1"/>
</dbReference>
<dbReference type="PANTHER" id="PTHR47811:SF1">
    <property type="entry name" value="TRNA PSEUDOURIDINE SYNTHASE D"/>
    <property type="match status" value="1"/>
</dbReference>
<dbReference type="Pfam" id="PF01142">
    <property type="entry name" value="TruD"/>
    <property type="match status" value="2"/>
</dbReference>
<dbReference type="SUPFAM" id="SSF55120">
    <property type="entry name" value="Pseudouridine synthase"/>
    <property type="match status" value="1"/>
</dbReference>
<dbReference type="PROSITE" id="PS50984">
    <property type="entry name" value="TRUD"/>
    <property type="match status" value="1"/>
</dbReference>
<dbReference type="PROSITE" id="PS01268">
    <property type="entry name" value="UPF0024"/>
    <property type="match status" value="1"/>
</dbReference>
<organism>
    <name type="scientific">Vibrio vulnificus (strain CMCP6)</name>
    <dbReference type="NCBI Taxonomy" id="216895"/>
    <lineage>
        <taxon>Bacteria</taxon>
        <taxon>Pseudomonadati</taxon>
        <taxon>Pseudomonadota</taxon>
        <taxon>Gammaproteobacteria</taxon>
        <taxon>Vibrionales</taxon>
        <taxon>Vibrionaceae</taxon>
        <taxon>Vibrio</taxon>
    </lineage>
</organism>
<name>TRUD_VIBVU</name>
<feature type="chain" id="PRO_0000152528" description="tRNA pseudouridine synthase D">
    <location>
        <begin position="1"/>
        <end position="347"/>
    </location>
</feature>
<feature type="domain" description="TRUD" evidence="1">
    <location>
        <begin position="158"/>
        <end position="304"/>
    </location>
</feature>
<feature type="active site" description="Nucleophile" evidence="1">
    <location>
        <position position="81"/>
    </location>
</feature>